<gene>
    <name evidence="1" type="primary">tpiA</name>
    <name type="ordered locus">PputGB1_4716</name>
</gene>
<sequence>MRRPMVAGNWKMHGTRASVAELTEGLSNLALPSGVEVAVFPPALFINQVIDGLAGKEITVGAQNSAVQPEQGALTGEVAPEQLVEAGCKLVLIGHSERRQVIGETDEVLNRKFAAAQAKGLKPVLCIGETLEEREAGKTLEVVGRQLSSIIEAFGVKAFANAVIAYEPVWAIGTGLTATPQQAQDVHAAIRGQLAAEDAEVAAKVQLLYGGSVKAANAAELFGMPDIDGGLIGGASLNADEFGAICRAAGN</sequence>
<dbReference type="EC" id="5.3.1.1" evidence="1"/>
<dbReference type="EMBL" id="CP000926">
    <property type="protein sequence ID" value="ABZ00603.1"/>
    <property type="molecule type" value="Genomic_DNA"/>
</dbReference>
<dbReference type="RefSeq" id="WP_012274247.1">
    <property type="nucleotide sequence ID" value="NC_010322.1"/>
</dbReference>
<dbReference type="SMR" id="B0KHY2"/>
<dbReference type="KEGG" id="ppg:PputGB1_4716"/>
<dbReference type="eggNOG" id="COG0149">
    <property type="taxonomic scope" value="Bacteria"/>
</dbReference>
<dbReference type="HOGENOM" id="CLU_024251_2_1_6"/>
<dbReference type="UniPathway" id="UPA00109">
    <property type="reaction ID" value="UER00189"/>
</dbReference>
<dbReference type="UniPathway" id="UPA00138"/>
<dbReference type="Proteomes" id="UP000002157">
    <property type="component" value="Chromosome"/>
</dbReference>
<dbReference type="GO" id="GO:0005829">
    <property type="term" value="C:cytosol"/>
    <property type="evidence" value="ECO:0007669"/>
    <property type="project" value="TreeGrafter"/>
</dbReference>
<dbReference type="GO" id="GO:0004807">
    <property type="term" value="F:triose-phosphate isomerase activity"/>
    <property type="evidence" value="ECO:0007669"/>
    <property type="project" value="UniProtKB-UniRule"/>
</dbReference>
<dbReference type="GO" id="GO:0006094">
    <property type="term" value="P:gluconeogenesis"/>
    <property type="evidence" value="ECO:0007669"/>
    <property type="project" value="UniProtKB-UniRule"/>
</dbReference>
<dbReference type="GO" id="GO:0046166">
    <property type="term" value="P:glyceraldehyde-3-phosphate biosynthetic process"/>
    <property type="evidence" value="ECO:0007669"/>
    <property type="project" value="TreeGrafter"/>
</dbReference>
<dbReference type="GO" id="GO:0019563">
    <property type="term" value="P:glycerol catabolic process"/>
    <property type="evidence" value="ECO:0007669"/>
    <property type="project" value="TreeGrafter"/>
</dbReference>
<dbReference type="GO" id="GO:0006096">
    <property type="term" value="P:glycolytic process"/>
    <property type="evidence" value="ECO:0007669"/>
    <property type="project" value="UniProtKB-UniRule"/>
</dbReference>
<dbReference type="CDD" id="cd00311">
    <property type="entry name" value="TIM"/>
    <property type="match status" value="1"/>
</dbReference>
<dbReference type="FunFam" id="3.20.20.70:FF:000016">
    <property type="entry name" value="Triosephosphate isomerase"/>
    <property type="match status" value="1"/>
</dbReference>
<dbReference type="Gene3D" id="3.20.20.70">
    <property type="entry name" value="Aldolase class I"/>
    <property type="match status" value="1"/>
</dbReference>
<dbReference type="HAMAP" id="MF_00147_B">
    <property type="entry name" value="TIM_B"/>
    <property type="match status" value="1"/>
</dbReference>
<dbReference type="InterPro" id="IPR013785">
    <property type="entry name" value="Aldolase_TIM"/>
</dbReference>
<dbReference type="InterPro" id="IPR035990">
    <property type="entry name" value="TIM_sf"/>
</dbReference>
<dbReference type="InterPro" id="IPR022896">
    <property type="entry name" value="TrioseP_Isoase_bac/euk"/>
</dbReference>
<dbReference type="InterPro" id="IPR000652">
    <property type="entry name" value="Triosephosphate_isomerase"/>
</dbReference>
<dbReference type="InterPro" id="IPR020861">
    <property type="entry name" value="Triosephosphate_isomerase_AS"/>
</dbReference>
<dbReference type="NCBIfam" id="TIGR00419">
    <property type="entry name" value="tim"/>
    <property type="match status" value="1"/>
</dbReference>
<dbReference type="PANTHER" id="PTHR21139">
    <property type="entry name" value="TRIOSEPHOSPHATE ISOMERASE"/>
    <property type="match status" value="1"/>
</dbReference>
<dbReference type="PANTHER" id="PTHR21139:SF42">
    <property type="entry name" value="TRIOSEPHOSPHATE ISOMERASE"/>
    <property type="match status" value="1"/>
</dbReference>
<dbReference type="Pfam" id="PF00121">
    <property type="entry name" value="TIM"/>
    <property type="match status" value="1"/>
</dbReference>
<dbReference type="SUPFAM" id="SSF51351">
    <property type="entry name" value="Triosephosphate isomerase (TIM)"/>
    <property type="match status" value="1"/>
</dbReference>
<dbReference type="PROSITE" id="PS00171">
    <property type="entry name" value="TIM_1"/>
    <property type="match status" value="1"/>
</dbReference>
<dbReference type="PROSITE" id="PS51440">
    <property type="entry name" value="TIM_2"/>
    <property type="match status" value="1"/>
</dbReference>
<feature type="chain" id="PRO_1000076656" description="Triosephosphate isomerase">
    <location>
        <begin position="1"/>
        <end position="251"/>
    </location>
</feature>
<feature type="active site" description="Electrophile" evidence="1">
    <location>
        <position position="95"/>
    </location>
</feature>
<feature type="active site" description="Proton acceptor" evidence="1">
    <location>
        <position position="167"/>
    </location>
</feature>
<feature type="binding site" evidence="1">
    <location>
        <begin position="9"/>
        <end position="11"/>
    </location>
    <ligand>
        <name>substrate</name>
    </ligand>
</feature>
<feature type="binding site" evidence="1">
    <location>
        <position position="173"/>
    </location>
    <ligand>
        <name>substrate</name>
    </ligand>
</feature>
<feature type="binding site" evidence="1">
    <location>
        <position position="212"/>
    </location>
    <ligand>
        <name>substrate</name>
    </ligand>
</feature>
<feature type="binding site" evidence="1">
    <location>
        <begin position="233"/>
        <end position="234"/>
    </location>
    <ligand>
        <name>substrate</name>
    </ligand>
</feature>
<comment type="function">
    <text evidence="1">Involved in the gluconeogenesis. Catalyzes stereospecifically the conversion of dihydroxyacetone phosphate (DHAP) to D-glyceraldehyde-3-phosphate (G3P).</text>
</comment>
<comment type="catalytic activity">
    <reaction evidence="1">
        <text>D-glyceraldehyde 3-phosphate = dihydroxyacetone phosphate</text>
        <dbReference type="Rhea" id="RHEA:18585"/>
        <dbReference type="ChEBI" id="CHEBI:57642"/>
        <dbReference type="ChEBI" id="CHEBI:59776"/>
        <dbReference type="EC" id="5.3.1.1"/>
    </reaction>
</comment>
<comment type="pathway">
    <text evidence="1">Carbohydrate biosynthesis; gluconeogenesis.</text>
</comment>
<comment type="pathway">
    <text evidence="1">Carbohydrate degradation; glycolysis; D-glyceraldehyde 3-phosphate from glycerone phosphate: step 1/1.</text>
</comment>
<comment type="subunit">
    <text evidence="1">Homodimer.</text>
</comment>
<comment type="subcellular location">
    <subcellularLocation>
        <location evidence="1">Cytoplasm</location>
    </subcellularLocation>
</comment>
<comment type="similarity">
    <text evidence="1">Belongs to the triosephosphate isomerase family.</text>
</comment>
<reference key="1">
    <citation type="submission" date="2008-01" db="EMBL/GenBank/DDBJ databases">
        <title>Complete sequence of Pseudomonas putida GB-1.</title>
        <authorList>
            <consortium name="US DOE Joint Genome Institute"/>
            <person name="Copeland A."/>
            <person name="Lucas S."/>
            <person name="Lapidus A."/>
            <person name="Barry K."/>
            <person name="Glavina del Rio T."/>
            <person name="Dalin E."/>
            <person name="Tice H."/>
            <person name="Pitluck S."/>
            <person name="Bruce D."/>
            <person name="Goodwin L."/>
            <person name="Chertkov O."/>
            <person name="Brettin T."/>
            <person name="Detter J.C."/>
            <person name="Han C."/>
            <person name="Kuske C.R."/>
            <person name="Schmutz J."/>
            <person name="Larimer F."/>
            <person name="Land M."/>
            <person name="Hauser L."/>
            <person name="Kyrpides N."/>
            <person name="Kim E."/>
            <person name="McCarthy J.K."/>
            <person name="Richardson P."/>
        </authorList>
    </citation>
    <scope>NUCLEOTIDE SEQUENCE [LARGE SCALE GENOMIC DNA]</scope>
    <source>
        <strain>GB-1</strain>
    </source>
</reference>
<protein>
    <recommendedName>
        <fullName evidence="1">Triosephosphate isomerase</fullName>
        <shortName evidence="1">TIM</shortName>
        <shortName evidence="1">TPI</shortName>
        <ecNumber evidence="1">5.3.1.1</ecNumber>
    </recommendedName>
    <alternativeName>
        <fullName evidence="1">Triose-phosphate isomerase</fullName>
    </alternativeName>
</protein>
<accession>B0KHY2</accession>
<keyword id="KW-0963">Cytoplasm</keyword>
<keyword id="KW-0312">Gluconeogenesis</keyword>
<keyword id="KW-0324">Glycolysis</keyword>
<keyword id="KW-0413">Isomerase</keyword>
<proteinExistence type="inferred from homology"/>
<evidence type="ECO:0000255" key="1">
    <source>
        <dbReference type="HAMAP-Rule" id="MF_00147"/>
    </source>
</evidence>
<name>TPIS_PSEPG</name>
<organism>
    <name type="scientific">Pseudomonas putida (strain GB-1)</name>
    <dbReference type="NCBI Taxonomy" id="76869"/>
    <lineage>
        <taxon>Bacteria</taxon>
        <taxon>Pseudomonadati</taxon>
        <taxon>Pseudomonadota</taxon>
        <taxon>Gammaproteobacteria</taxon>
        <taxon>Pseudomonadales</taxon>
        <taxon>Pseudomonadaceae</taxon>
        <taxon>Pseudomonas</taxon>
    </lineage>
</organism>